<proteinExistence type="inferred from homology"/>
<keyword id="KW-0066">ATP synthesis</keyword>
<keyword id="KW-0067">ATP-binding</keyword>
<keyword id="KW-0997">Cell inner membrane</keyword>
<keyword id="KW-1003">Cell membrane</keyword>
<keyword id="KW-0139">CF(1)</keyword>
<keyword id="KW-0375">Hydrogen ion transport</keyword>
<keyword id="KW-0406">Ion transport</keyword>
<keyword id="KW-0472">Membrane</keyword>
<keyword id="KW-0547">Nucleotide-binding</keyword>
<keyword id="KW-1278">Translocase</keyword>
<keyword id="KW-0813">Transport</keyword>
<name>ATPB_HELPH</name>
<organism>
    <name type="scientific">Helicobacter pylori (strain HPAG1)</name>
    <dbReference type="NCBI Taxonomy" id="357544"/>
    <lineage>
        <taxon>Bacteria</taxon>
        <taxon>Pseudomonadati</taxon>
        <taxon>Campylobacterota</taxon>
        <taxon>Epsilonproteobacteria</taxon>
        <taxon>Campylobacterales</taxon>
        <taxon>Helicobacteraceae</taxon>
        <taxon>Helicobacter</taxon>
    </lineage>
</organism>
<reference key="1">
    <citation type="journal article" date="2006" name="Proc. Natl. Acad. Sci. U.S.A.">
        <title>The complete genome sequence of a chronic atrophic gastritis Helicobacter pylori strain: evolution during disease progression.</title>
        <authorList>
            <person name="Oh J.D."/>
            <person name="Kling-Baeckhed H."/>
            <person name="Giannakis M."/>
            <person name="Xu J."/>
            <person name="Fulton R.S."/>
            <person name="Fulton L.A."/>
            <person name="Cordum H.S."/>
            <person name="Wang C."/>
            <person name="Elliott G."/>
            <person name="Edwards J."/>
            <person name="Mardis E.R."/>
            <person name="Engstrand L.G."/>
            <person name="Gordon J.I."/>
        </authorList>
    </citation>
    <scope>NUCLEOTIDE SEQUENCE [LARGE SCALE GENOMIC DNA]</scope>
    <source>
        <strain>HPAG1</strain>
    </source>
</reference>
<comment type="function">
    <text evidence="1">Produces ATP from ADP in the presence of a proton gradient across the membrane. The catalytic sites are hosted primarily by the beta subunits.</text>
</comment>
<comment type="catalytic activity">
    <reaction evidence="1">
        <text>ATP + H2O + 4 H(+)(in) = ADP + phosphate + 5 H(+)(out)</text>
        <dbReference type="Rhea" id="RHEA:57720"/>
        <dbReference type="ChEBI" id="CHEBI:15377"/>
        <dbReference type="ChEBI" id="CHEBI:15378"/>
        <dbReference type="ChEBI" id="CHEBI:30616"/>
        <dbReference type="ChEBI" id="CHEBI:43474"/>
        <dbReference type="ChEBI" id="CHEBI:456216"/>
        <dbReference type="EC" id="7.1.2.2"/>
    </reaction>
</comment>
<comment type="subunit">
    <text evidence="1">F-type ATPases have 2 components, CF(1) - the catalytic core - and CF(0) - the membrane proton channel. CF(1) has five subunits: alpha(3), beta(3), gamma(1), delta(1), epsilon(1). CF(0) has three main subunits: a(1), b(2) and c(9-12). The alpha and beta chains form an alternating ring which encloses part of the gamma chain. CF(1) is attached to CF(0) by a central stalk formed by the gamma and epsilon chains, while a peripheral stalk is formed by the delta and b chains.</text>
</comment>
<comment type="subcellular location">
    <subcellularLocation>
        <location evidence="1">Cell inner membrane</location>
        <topology evidence="1">Peripheral membrane protein</topology>
    </subcellularLocation>
</comment>
<comment type="similarity">
    <text evidence="1">Belongs to the ATPase alpha/beta chains family.</text>
</comment>
<comment type="sequence caution" evidence="2">
    <conflict type="erroneous initiation">
        <sequence resource="EMBL-CDS" id="ABF85137"/>
    </conflict>
</comment>
<dbReference type="EC" id="7.1.2.2" evidence="1"/>
<dbReference type="EMBL" id="CP000241">
    <property type="protein sequence ID" value="ABF85137.1"/>
    <property type="status" value="ALT_INIT"/>
    <property type="molecule type" value="Genomic_DNA"/>
</dbReference>
<dbReference type="RefSeq" id="WP_001881339.1">
    <property type="nucleotide sequence ID" value="NC_008086.1"/>
</dbReference>
<dbReference type="SMR" id="Q1CSD5"/>
<dbReference type="KEGG" id="hpa:HPAG1_1070"/>
<dbReference type="HOGENOM" id="CLU_022398_0_2_7"/>
<dbReference type="GO" id="GO:0005886">
    <property type="term" value="C:plasma membrane"/>
    <property type="evidence" value="ECO:0007669"/>
    <property type="project" value="UniProtKB-SubCell"/>
</dbReference>
<dbReference type="GO" id="GO:0045259">
    <property type="term" value="C:proton-transporting ATP synthase complex"/>
    <property type="evidence" value="ECO:0007669"/>
    <property type="project" value="UniProtKB-KW"/>
</dbReference>
<dbReference type="GO" id="GO:0005524">
    <property type="term" value="F:ATP binding"/>
    <property type="evidence" value="ECO:0007669"/>
    <property type="project" value="UniProtKB-UniRule"/>
</dbReference>
<dbReference type="GO" id="GO:0016887">
    <property type="term" value="F:ATP hydrolysis activity"/>
    <property type="evidence" value="ECO:0007669"/>
    <property type="project" value="InterPro"/>
</dbReference>
<dbReference type="GO" id="GO:0046933">
    <property type="term" value="F:proton-transporting ATP synthase activity, rotational mechanism"/>
    <property type="evidence" value="ECO:0007669"/>
    <property type="project" value="UniProtKB-UniRule"/>
</dbReference>
<dbReference type="CDD" id="cd18110">
    <property type="entry name" value="ATP-synt_F1_beta_C"/>
    <property type="match status" value="1"/>
</dbReference>
<dbReference type="CDD" id="cd18115">
    <property type="entry name" value="ATP-synt_F1_beta_N"/>
    <property type="match status" value="1"/>
</dbReference>
<dbReference type="CDD" id="cd01133">
    <property type="entry name" value="F1-ATPase_beta_CD"/>
    <property type="match status" value="1"/>
</dbReference>
<dbReference type="FunFam" id="1.10.1140.10:FF:000001">
    <property type="entry name" value="ATP synthase subunit beta"/>
    <property type="match status" value="1"/>
</dbReference>
<dbReference type="FunFam" id="2.40.10.170:FF:000016">
    <property type="entry name" value="ATP synthase subunit beta"/>
    <property type="match status" value="1"/>
</dbReference>
<dbReference type="FunFam" id="3.40.50.300:FF:000004">
    <property type="entry name" value="ATP synthase subunit beta"/>
    <property type="match status" value="1"/>
</dbReference>
<dbReference type="Gene3D" id="2.40.10.170">
    <property type="match status" value="1"/>
</dbReference>
<dbReference type="Gene3D" id="1.10.1140.10">
    <property type="entry name" value="Bovine Mitochondrial F1-atpase, Atp Synthase Beta Chain, Chain D, domain 3"/>
    <property type="match status" value="1"/>
</dbReference>
<dbReference type="Gene3D" id="3.40.50.300">
    <property type="entry name" value="P-loop containing nucleotide triphosphate hydrolases"/>
    <property type="match status" value="1"/>
</dbReference>
<dbReference type="HAMAP" id="MF_01347">
    <property type="entry name" value="ATP_synth_beta_bact"/>
    <property type="match status" value="1"/>
</dbReference>
<dbReference type="InterPro" id="IPR003593">
    <property type="entry name" value="AAA+_ATPase"/>
</dbReference>
<dbReference type="InterPro" id="IPR055190">
    <property type="entry name" value="ATP-synt_VA_C"/>
</dbReference>
<dbReference type="InterPro" id="IPR005722">
    <property type="entry name" value="ATP_synth_F1_bsu"/>
</dbReference>
<dbReference type="InterPro" id="IPR020003">
    <property type="entry name" value="ATPase_a/bsu_AS"/>
</dbReference>
<dbReference type="InterPro" id="IPR050053">
    <property type="entry name" value="ATPase_alpha/beta_chains"/>
</dbReference>
<dbReference type="InterPro" id="IPR004100">
    <property type="entry name" value="ATPase_F1/V1/A1_a/bsu_N"/>
</dbReference>
<dbReference type="InterPro" id="IPR036121">
    <property type="entry name" value="ATPase_F1/V1/A1_a/bsu_N_sf"/>
</dbReference>
<dbReference type="InterPro" id="IPR000194">
    <property type="entry name" value="ATPase_F1/V1/A1_a/bsu_nucl-bd"/>
</dbReference>
<dbReference type="InterPro" id="IPR024034">
    <property type="entry name" value="ATPase_F1/V1_b/a_C"/>
</dbReference>
<dbReference type="InterPro" id="IPR027417">
    <property type="entry name" value="P-loop_NTPase"/>
</dbReference>
<dbReference type="NCBIfam" id="TIGR01039">
    <property type="entry name" value="atpD"/>
    <property type="match status" value="1"/>
</dbReference>
<dbReference type="PANTHER" id="PTHR15184">
    <property type="entry name" value="ATP SYNTHASE"/>
    <property type="match status" value="1"/>
</dbReference>
<dbReference type="PANTHER" id="PTHR15184:SF71">
    <property type="entry name" value="ATP SYNTHASE SUBUNIT BETA, MITOCHONDRIAL"/>
    <property type="match status" value="1"/>
</dbReference>
<dbReference type="Pfam" id="PF00006">
    <property type="entry name" value="ATP-synt_ab"/>
    <property type="match status" value="1"/>
</dbReference>
<dbReference type="Pfam" id="PF02874">
    <property type="entry name" value="ATP-synt_ab_N"/>
    <property type="match status" value="1"/>
</dbReference>
<dbReference type="Pfam" id="PF22919">
    <property type="entry name" value="ATP-synt_VA_C"/>
    <property type="match status" value="1"/>
</dbReference>
<dbReference type="SMART" id="SM00382">
    <property type="entry name" value="AAA"/>
    <property type="match status" value="1"/>
</dbReference>
<dbReference type="SUPFAM" id="SSF47917">
    <property type="entry name" value="C-terminal domain of alpha and beta subunits of F1 ATP synthase"/>
    <property type="match status" value="1"/>
</dbReference>
<dbReference type="SUPFAM" id="SSF50615">
    <property type="entry name" value="N-terminal domain of alpha and beta subunits of F1 ATP synthase"/>
    <property type="match status" value="1"/>
</dbReference>
<dbReference type="SUPFAM" id="SSF52540">
    <property type="entry name" value="P-loop containing nucleoside triphosphate hydrolases"/>
    <property type="match status" value="1"/>
</dbReference>
<dbReference type="PROSITE" id="PS00152">
    <property type="entry name" value="ATPASE_ALPHA_BETA"/>
    <property type="match status" value="1"/>
</dbReference>
<accession>Q1CSD5</accession>
<protein>
    <recommendedName>
        <fullName evidence="1">ATP synthase subunit beta</fullName>
        <ecNumber evidence="1">7.1.2.2</ecNumber>
    </recommendedName>
    <alternativeName>
        <fullName evidence="1">ATP synthase F1 sector subunit beta</fullName>
    </alternativeName>
    <alternativeName>
        <fullName evidence="1">F-ATPase subunit beta</fullName>
    </alternativeName>
</protein>
<sequence length="466" mass="51174">MEGKIIQVLGPVVDVEFESYLPAIFEALDINFEVNGVQKSLVLEVAAHLGGNRVRAIAMDMTEGLVRNQIVKARGKMIEVPVGEEVLGRIFNVVGESIDNLEPLKPSLTWPIHRKAPSFEQQSTKTEMFETGIKVIDLLAPYSKGGKVGLFGGAGVGKTVIIMELIHNVAYKHNGYSVFAGVGERTREGNDLYFEMKEGGVLDKVALCYGQMNEPPGARNRIAFTGLTMAEYFRDEKGLDVLMFIDNIFRYAQSGAEMSALLGRIPSAVGYQPTLAGEMGKLQERIASTKNGSITSVQAVYVPADDLTDPAPASVFAHLDATTVLNRKIAEKGIYPAVDPLDSTSRILSPQMIGEKHYEIATGIQQVLQKYKDLQDIIAILGLDELSEEDKKIVERARKIEKFLSQPFFVAEVFTGSPGKYVTLQETLEGFGGILEGKYDHIPENAFYMVGSIQEVLEKAKNMKNS</sequence>
<feature type="chain" id="PRO_0000254275" description="ATP synthase subunit beta">
    <location>
        <begin position="1"/>
        <end position="466"/>
    </location>
</feature>
<feature type="binding site" evidence="1">
    <location>
        <begin position="152"/>
        <end position="159"/>
    </location>
    <ligand>
        <name>ATP</name>
        <dbReference type="ChEBI" id="CHEBI:30616"/>
    </ligand>
</feature>
<gene>
    <name evidence="1" type="primary">atpD</name>
    <name type="ordered locus">HPAG1_1070</name>
</gene>
<evidence type="ECO:0000255" key="1">
    <source>
        <dbReference type="HAMAP-Rule" id="MF_01347"/>
    </source>
</evidence>
<evidence type="ECO:0000305" key="2"/>